<sequence>MTQVVNVVGAGLAGSEAAYQLAQRGVKVNLIEMRPVKQTPAHHTDKFAELVCSNSLRGNALTNAVGVLKEEMRQLDSLIISAADKARVPAGGALAVDRHDFAGYVTETLKNHPNITVLNEEINSIPEGYTIIATGPLTTDKLANEIVEATGKDQLYFYDAAAPIIEKDSIDMNKVYLKSRYDKGEAAYLNCPMTEDEFNTFYDALMEAEVAPVNEFEKEKYFEGCMPFEVMAERGRKTLLFGPMKPVGLEDPKTGERPYAVVQLRQDDAAGTLYNIVGFQTHLKWGAQKDVIRLIPGLENVEIVRYGVMHRNTFINSPDVLTETYELKGREELYFAGQMTGVEGYVESAASGLVAGINVAHKMLNKGEVIFPRETMIGSMAYYISHAKNEKNFQPMNANFGLLTTLEKKVKDKKLRYEKLADRALTYLDNYKQTL</sequence>
<keyword id="KW-0963">Cytoplasm</keyword>
<keyword id="KW-0274">FAD</keyword>
<keyword id="KW-0285">Flavoprotein</keyword>
<keyword id="KW-0489">Methyltransferase</keyword>
<keyword id="KW-0520">NAD</keyword>
<keyword id="KW-0521">NADP</keyword>
<keyword id="KW-1185">Reference proteome</keyword>
<keyword id="KW-0808">Transferase</keyword>
<keyword id="KW-0819">tRNA processing</keyword>
<feature type="chain" id="PRO_0000117268" description="Methylenetetrahydrofolate--tRNA-(uracil-5-)-methyltransferase TrmFO">
    <location>
        <begin position="1"/>
        <end position="435"/>
    </location>
</feature>
<feature type="binding site" evidence="1">
    <location>
        <begin position="9"/>
        <end position="14"/>
    </location>
    <ligand>
        <name>FAD</name>
        <dbReference type="ChEBI" id="CHEBI:57692"/>
    </ligand>
</feature>
<dbReference type="EC" id="2.1.1.74" evidence="1"/>
<dbReference type="EMBL" id="AP008934">
    <property type="protein sequence ID" value="BAE18662.1"/>
    <property type="molecule type" value="Genomic_DNA"/>
</dbReference>
<dbReference type="RefSeq" id="WP_011303267.1">
    <property type="nucleotide sequence ID" value="NC_007350.1"/>
</dbReference>
<dbReference type="SMR" id="Q49X36"/>
<dbReference type="DNASU" id="3615163"/>
<dbReference type="GeneID" id="3615163"/>
<dbReference type="KEGG" id="ssp:SSP1517"/>
<dbReference type="PATRIC" id="fig|342451.11.peg.1519"/>
<dbReference type="eggNOG" id="COG1206">
    <property type="taxonomic scope" value="Bacteria"/>
</dbReference>
<dbReference type="HOGENOM" id="CLU_033057_1_0_9"/>
<dbReference type="OrthoDB" id="9803114at2"/>
<dbReference type="Proteomes" id="UP000006371">
    <property type="component" value="Chromosome"/>
</dbReference>
<dbReference type="GO" id="GO:0005829">
    <property type="term" value="C:cytosol"/>
    <property type="evidence" value="ECO:0007669"/>
    <property type="project" value="TreeGrafter"/>
</dbReference>
<dbReference type="GO" id="GO:0050660">
    <property type="term" value="F:flavin adenine dinucleotide binding"/>
    <property type="evidence" value="ECO:0007669"/>
    <property type="project" value="UniProtKB-UniRule"/>
</dbReference>
<dbReference type="GO" id="GO:0047151">
    <property type="term" value="F:tRNA (uracil(54)-C5)-methyltransferase activity, 5,10-methylenetetrahydrofolate-dependent"/>
    <property type="evidence" value="ECO:0007669"/>
    <property type="project" value="UniProtKB-UniRule"/>
</dbReference>
<dbReference type="GO" id="GO:0030488">
    <property type="term" value="P:tRNA methylation"/>
    <property type="evidence" value="ECO:0007669"/>
    <property type="project" value="TreeGrafter"/>
</dbReference>
<dbReference type="GO" id="GO:0002098">
    <property type="term" value="P:tRNA wobble uridine modification"/>
    <property type="evidence" value="ECO:0007669"/>
    <property type="project" value="TreeGrafter"/>
</dbReference>
<dbReference type="FunFam" id="3.50.50.60:FF:000035">
    <property type="entry name" value="Methylenetetrahydrofolate--tRNA-(uracil-5-)-methyltransferase TrmFO"/>
    <property type="match status" value="1"/>
</dbReference>
<dbReference type="FunFam" id="3.50.50.60:FF:000040">
    <property type="entry name" value="Methylenetetrahydrofolate--tRNA-(uracil-5-)-methyltransferase TrmFO"/>
    <property type="match status" value="1"/>
</dbReference>
<dbReference type="Gene3D" id="3.50.50.60">
    <property type="entry name" value="FAD/NAD(P)-binding domain"/>
    <property type="match status" value="2"/>
</dbReference>
<dbReference type="HAMAP" id="MF_01037">
    <property type="entry name" value="TrmFO"/>
    <property type="match status" value="1"/>
</dbReference>
<dbReference type="InterPro" id="IPR036188">
    <property type="entry name" value="FAD/NAD-bd_sf"/>
</dbReference>
<dbReference type="InterPro" id="IPR002218">
    <property type="entry name" value="MnmG-rel"/>
</dbReference>
<dbReference type="InterPro" id="IPR020595">
    <property type="entry name" value="MnmG-rel_CS"/>
</dbReference>
<dbReference type="InterPro" id="IPR040131">
    <property type="entry name" value="MnmG_N"/>
</dbReference>
<dbReference type="InterPro" id="IPR004417">
    <property type="entry name" value="TrmFO"/>
</dbReference>
<dbReference type="NCBIfam" id="TIGR00137">
    <property type="entry name" value="gid_trmFO"/>
    <property type="match status" value="1"/>
</dbReference>
<dbReference type="NCBIfam" id="NF003739">
    <property type="entry name" value="PRK05335.1"/>
    <property type="match status" value="1"/>
</dbReference>
<dbReference type="PANTHER" id="PTHR11806">
    <property type="entry name" value="GLUCOSE INHIBITED DIVISION PROTEIN A"/>
    <property type="match status" value="1"/>
</dbReference>
<dbReference type="PANTHER" id="PTHR11806:SF2">
    <property type="entry name" value="METHYLENETETRAHYDROFOLATE--TRNA-(URACIL-5-)-METHYLTRANSFERASE TRMFO"/>
    <property type="match status" value="1"/>
</dbReference>
<dbReference type="Pfam" id="PF01134">
    <property type="entry name" value="GIDA"/>
    <property type="match status" value="1"/>
</dbReference>
<dbReference type="SUPFAM" id="SSF51905">
    <property type="entry name" value="FAD/NAD(P)-binding domain"/>
    <property type="match status" value="1"/>
</dbReference>
<dbReference type="PROSITE" id="PS01281">
    <property type="entry name" value="GIDA_2"/>
    <property type="match status" value="1"/>
</dbReference>
<evidence type="ECO:0000255" key="1">
    <source>
        <dbReference type="HAMAP-Rule" id="MF_01037"/>
    </source>
</evidence>
<proteinExistence type="inferred from homology"/>
<protein>
    <recommendedName>
        <fullName evidence="1">Methylenetetrahydrofolate--tRNA-(uracil-5-)-methyltransferase TrmFO</fullName>
        <ecNumber evidence="1">2.1.1.74</ecNumber>
    </recommendedName>
    <alternativeName>
        <fullName evidence="1">Folate-dependent tRNA (uracil-5-)-methyltransferase</fullName>
    </alternativeName>
    <alternativeName>
        <fullName evidence="1">Folate-dependent tRNA(M-5-U54)-methyltransferase</fullName>
    </alternativeName>
</protein>
<comment type="function">
    <text evidence="1">Catalyzes the folate-dependent formation of 5-methyl-uridine at position 54 (M-5-U54) in all tRNAs.</text>
</comment>
<comment type="catalytic activity">
    <reaction evidence="1">
        <text>uridine(54) in tRNA + (6R)-5,10-methylene-5,6,7,8-tetrahydrofolate + NADH + H(+) = 5-methyluridine(54) in tRNA + (6S)-5,6,7,8-tetrahydrofolate + NAD(+)</text>
        <dbReference type="Rhea" id="RHEA:16873"/>
        <dbReference type="Rhea" id="RHEA-COMP:10167"/>
        <dbReference type="Rhea" id="RHEA-COMP:10193"/>
        <dbReference type="ChEBI" id="CHEBI:15378"/>
        <dbReference type="ChEBI" id="CHEBI:15636"/>
        <dbReference type="ChEBI" id="CHEBI:57453"/>
        <dbReference type="ChEBI" id="CHEBI:57540"/>
        <dbReference type="ChEBI" id="CHEBI:57945"/>
        <dbReference type="ChEBI" id="CHEBI:65315"/>
        <dbReference type="ChEBI" id="CHEBI:74447"/>
        <dbReference type="EC" id="2.1.1.74"/>
    </reaction>
</comment>
<comment type="catalytic activity">
    <reaction evidence="1">
        <text>uridine(54) in tRNA + (6R)-5,10-methylene-5,6,7,8-tetrahydrofolate + NADPH + H(+) = 5-methyluridine(54) in tRNA + (6S)-5,6,7,8-tetrahydrofolate + NADP(+)</text>
        <dbReference type="Rhea" id="RHEA:62372"/>
        <dbReference type="Rhea" id="RHEA-COMP:10167"/>
        <dbReference type="Rhea" id="RHEA-COMP:10193"/>
        <dbReference type="ChEBI" id="CHEBI:15378"/>
        <dbReference type="ChEBI" id="CHEBI:15636"/>
        <dbReference type="ChEBI" id="CHEBI:57453"/>
        <dbReference type="ChEBI" id="CHEBI:57783"/>
        <dbReference type="ChEBI" id="CHEBI:58349"/>
        <dbReference type="ChEBI" id="CHEBI:65315"/>
        <dbReference type="ChEBI" id="CHEBI:74447"/>
        <dbReference type="EC" id="2.1.1.74"/>
    </reaction>
</comment>
<comment type="cofactor">
    <cofactor evidence="1">
        <name>FAD</name>
        <dbReference type="ChEBI" id="CHEBI:57692"/>
    </cofactor>
</comment>
<comment type="subcellular location">
    <subcellularLocation>
        <location evidence="1">Cytoplasm</location>
    </subcellularLocation>
</comment>
<comment type="similarity">
    <text evidence="1">Belongs to the MnmG family. TrmFO subfamily.</text>
</comment>
<organism>
    <name type="scientific">Staphylococcus saprophyticus subsp. saprophyticus (strain ATCC 15305 / DSM 20229 / NCIMB 8711 / NCTC 7292 / S-41)</name>
    <dbReference type="NCBI Taxonomy" id="342451"/>
    <lineage>
        <taxon>Bacteria</taxon>
        <taxon>Bacillati</taxon>
        <taxon>Bacillota</taxon>
        <taxon>Bacilli</taxon>
        <taxon>Bacillales</taxon>
        <taxon>Staphylococcaceae</taxon>
        <taxon>Staphylococcus</taxon>
    </lineage>
</organism>
<accession>Q49X36</accession>
<gene>
    <name evidence="1" type="primary">trmFO</name>
    <name type="synonym">gid</name>
    <name type="ordered locus">SSP1517</name>
</gene>
<reference key="1">
    <citation type="journal article" date="2005" name="Proc. Natl. Acad. Sci. U.S.A.">
        <title>Whole genome sequence of Staphylococcus saprophyticus reveals the pathogenesis of uncomplicated urinary tract infection.</title>
        <authorList>
            <person name="Kuroda M."/>
            <person name="Yamashita A."/>
            <person name="Hirakawa H."/>
            <person name="Kumano M."/>
            <person name="Morikawa K."/>
            <person name="Higashide M."/>
            <person name="Maruyama A."/>
            <person name="Inose Y."/>
            <person name="Matoba K."/>
            <person name="Toh H."/>
            <person name="Kuhara S."/>
            <person name="Hattori M."/>
            <person name="Ohta T."/>
        </authorList>
    </citation>
    <scope>NUCLEOTIDE SEQUENCE [LARGE SCALE GENOMIC DNA]</scope>
    <source>
        <strain>ATCC 15305 / DSM 20229 / NCIMB 8711 / NCTC 7292 / S-41</strain>
    </source>
</reference>
<name>TRMFO_STAS1</name>